<feature type="chain" id="PRO_0000152927" description="Sulfur carrier protein FdhD">
    <location>
        <begin position="1"/>
        <end position="265"/>
    </location>
</feature>
<feature type="active site" description="Cysteine persulfide intermediate" evidence="1">
    <location>
        <position position="107"/>
    </location>
</feature>
<dbReference type="EMBL" id="BA000033">
    <property type="protein sequence ID" value="BAB96063.1"/>
    <property type="molecule type" value="Genomic_DNA"/>
</dbReference>
<dbReference type="RefSeq" id="WP_001030825.1">
    <property type="nucleotide sequence ID" value="NC_003923.1"/>
</dbReference>
<dbReference type="SMR" id="Q8NV95"/>
<dbReference type="KEGG" id="sam:MW2198"/>
<dbReference type="HOGENOM" id="CLU_056887_4_1_9"/>
<dbReference type="GO" id="GO:0005737">
    <property type="term" value="C:cytoplasm"/>
    <property type="evidence" value="ECO:0007669"/>
    <property type="project" value="UniProtKB-SubCell"/>
</dbReference>
<dbReference type="GO" id="GO:0097163">
    <property type="term" value="F:sulfur carrier activity"/>
    <property type="evidence" value="ECO:0007669"/>
    <property type="project" value="UniProtKB-UniRule"/>
</dbReference>
<dbReference type="GO" id="GO:0016783">
    <property type="term" value="F:sulfurtransferase activity"/>
    <property type="evidence" value="ECO:0007669"/>
    <property type="project" value="InterPro"/>
</dbReference>
<dbReference type="GO" id="GO:0006777">
    <property type="term" value="P:Mo-molybdopterin cofactor biosynthetic process"/>
    <property type="evidence" value="ECO:0007669"/>
    <property type="project" value="UniProtKB-UniRule"/>
</dbReference>
<dbReference type="Gene3D" id="3.10.20.10">
    <property type="match status" value="1"/>
</dbReference>
<dbReference type="Gene3D" id="3.40.140.10">
    <property type="entry name" value="Cytidine Deaminase, domain 2"/>
    <property type="match status" value="1"/>
</dbReference>
<dbReference type="HAMAP" id="MF_00187">
    <property type="entry name" value="FdhD"/>
    <property type="match status" value="1"/>
</dbReference>
<dbReference type="InterPro" id="IPR016193">
    <property type="entry name" value="Cytidine_deaminase-like"/>
</dbReference>
<dbReference type="InterPro" id="IPR003786">
    <property type="entry name" value="FdhD"/>
</dbReference>
<dbReference type="NCBIfam" id="TIGR00129">
    <property type="entry name" value="fdhD_narQ"/>
    <property type="match status" value="1"/>
</dbReference>
<dbReference type="PANTHER" id="PTHR30592">
    <property type="entry name" value="FORMATE DEHYDROGENASE"/>
    <property type="match status" value="1"/>
</dbReference>
<dbReference type="PANTHER" id="PTHR30592:SF1">
    <property type="entry name" value="SULFUR CARRIER PROTEIN FDHD"/>
    <property type="match status" value="1"/>
</dbReference>
<dbReference type="Pfam" id="PF02634">
    <property type="entry name" value="FdhD-NarQ"/>
    <property type="match status" value="1"/>
</dbReference>
<dbReference type="PIRSF" id="PIRSF015626">
    <property type="entry name" value="FdhD"/>
    <property type="match status" value="1"/>
</dbReference>
<dbReference type="SUPFAM" id="SSF53927">
    <property type="entry name" value="Cytidine deaminase-like"/>
    <property type="match status" value="1"/>
</dbReference>
<accession>Q8NV95</accession>
<evidence type="ECO:0000255" key="1">
    <source>
        <dbReference type="HAMAP-Rule" id="MF_00187"/>
    </source>
</evidence>
<name>FDHD_STAAW</name>
<protein>
    <recommendedName>
        <fullName evidence="1">Sulfur carrier protein FdhD</fullName>
    </recommendedName>
</protein>
<organism>
    <name type="scientific">Staphylococcus aureus (strain MW2)</name>
    <dbReference type="NCBI Taxonomy" id="196620"/>
    <lineage>
        <taxon>Bacteria</taxon>
        <taxon>Bacillati</taxon>
        <taxon>Bacillota</taxon>
        <taxon>Bacilli</taxon>
        <taxon>Bacillales</taxon>
        <taxon>Staphylococcaceae</taxon>
        <taxon>Staphylococcus</taxon>
    </lineage>
</organism>
<proteinExistence type="inferred from homology"/>
<gene>
    <name evidence="1" type="primary">fdhD</name>
    <name type="synonym">narQ</name>
    <name type="ordered locus">MW2198</name>
</gene>
<sequence length="265" mass="29416">MNKDVSLGQPIVRYEDGKLFNTTDQYVTEFPLTIMVNGEEFATVICSPTNLEELVIGFLASEGAILKRDELKSVLIDDSKGFAHVELNKDLGDRFQYSTKRMIASCCGKSREFYFQNDAAIAKTSMSKITLTPMQIINMMTRLQSASHIYQETGGLHNAAISDGLTFFVHRQDIGRHNALDKLYGFCIQRHITVRDKVLIFSGRISSEILIKAAKIGVGVILSKSAPTTLAVTLANDLNITAVGFIRNGGFNIYSHPERIIDSEQ</sequence>
<comment type="function">
    <text evidence="1">Required for formate dehydrogenase (FDH) activity. Acts as a sulfur carrier protein that transfers sulfur from IscS to the molybdenum cofactor prior to its insertion into FDH.</text>
</comment>
<comment type="subcellular location">
    <subcellularLocation>
        <location evidence="1">Cytoplasm</location>
    </subcellularLocation>
</comment>
<comment type="similarity">
    <text evidence="1">Belongs to the FdhD family.</text>
</comment>
<reference key="1">
    <citation type="journal article" date="2002" name="Lancet">
        <title>Genome and virulence determinants of high virulence community-acquired MRSA.</title>
        <authorList>
            <person name="Baba T."/>
            <person name="Takeuchi F."/>
            <person name="Kuroda M."/>
            <person name="Yuzawa H."/>
            <person name="Aoki K."/>
            <person name="Oguchi A."/>
            <person name="Nagai Y."/>
            <person name="Iwama N."/>
            <person name="Asano K."/>
            <person name="Naimi T."/>
            <person name="Kuroda H."/>
            <person name="Cui L."/>
            <person name="Yamamoto K."/>
            <person name="Hiramatsu K."/>
        </authorList>
    </citation>
    <scope>NUCLEOTIDE SEQUENCE [LARGE SCALE GENOMIC DNA]</scope>
    <source>
        <strain>MW2</strain>
    </source>
</reference>
<keyword id="KW-0963">Cytoplasm</keyword>
<keyword id="KW-0501">Molybdenum cofactor biosynthesis</keyword>